<keyword id="KW-0472">Membrane</keyword>
<keyword id="KW-0602">Photosynthesis</keyword>
<keyword id="KW-0604">Photosystem II</keyword>
<keyword id="KW-1185">Reference proteome</keyword>
<keyword id="KW-0793">Thylakoid</keyword>
<keyword id="KW-0812">Transmembrane</keyword>
<keyword id="KW-1133">Transmembrane helix</keyword>
<evidence type="ECO:0000255" key="1">
    <source>
        <dbReference type="HAMAP-Rule" id="MF_00752"/>
    </source>
</evidence>
<protein>
    <recommendedName>
        <fullName evidence="1">Photosystem II reaction center protein H</fullName>
        <shortName evidence="1">PSII-H</shortName>
    </recommendedName>
</protein>
<name>PSBH_SYNS9</name>
<proteinExistence type="inferred from homology"/>
<reference key="1">
    <citation type="submission" date="2005-08" db="EMBL/GenBank/DDBJ databases">
        <title>Complete sequence of Synechococcus sp. CC9902.</title>
        <authorList>
            <person name="Copeland A."/>
            <person name="Lucas S."/>
            <person name="Lapidus A."/>
            <person name="Barry K."/>
            <person name="Detter J.C."/>
            <person name="Glavina T."/>
            <person name="Hammon N."/>
            <person name="Israni S."/>
            <person name="Pitluck S."/>
            <person name="Martinez M."/>
            <person name="Schmutz J."/>
            <person name="Larimer F."/>
            <person name="Land M."/>
            <person name="Kyrpides N."/>
            <person name="Ivanova N."/>
            <person name="Richardson P."/>
        </authorList>
    </citation>
    <scope>NUCLEOTIDE SEQUENCE [LARGE SCALE GENOMIC DNA]</scope>
    <source>
        <strain>CC9902</strain>
    </source>
</reference>
<comment type="function">
    <text evidence="1">One of the components of the core complex of photosystem II (PSII), required for its stability and/or assembly. PSII is a light-driven water:plastoquinone oxidoreductase that uses light energy to abstract electrons from H(2)O, generating O(2) and a proton gradient subsequently used for ATP formation. It consists of a core antenna complex that captures photons, and an electron transfer chain that converts photonic excitation into a charge separation.</text>
</comment>
<comment type="subunit">
    <text evidence="1">PSII is composed of 1 copy each of membrane proteins PsbA, PsbB, PsbC, PsbD, PsbE, PsbF, PsbH, PsbI, PsbJ, PsbK, PsbL, PsbM, PsbT, PsbX, PsbY, PsbZ, Psb30/Ycf12, peripheral proteins PsbO, CyanoQ (PsbQ), PsbU, PsbV and a large number of cofactors. It forms dimeric complexes.</text>
</comment>
<comment type="subcellular location">
    <subcellularLocation>
        <location evidence="1">Cellular thylakoid membrane</location>
        <topology evidence="1">Single-pass membrane protein</topology>
    </subcellularLocation>
</comment>
<comment type="similarity">
    <text evidence="1">Belongs to the PsbH family.</text>
</comment>
<gene>
    <name evidence="1" type="primary">psbH</name>
    <name type="ordered locus">Syncc9902_2081</name>
</gene>
<dbReference type="EMBL" id="CP000097">
    <property type="protein sequence ID" value="ABB27039.1"/>
    <property type="molecule type" value="Genomic_DNA"/>
</dbReference>
<dbReference type="RefSeq" id="WP_006849996.1">
    <property type="nucleotide sequence ID" value="NC_007513.1"/>
</dbReference>
<dbReference type="SMR" id="Q3AUQ6"/>
<dbReference type="STRING" id="316279.Syncc9902_2081"/>
<dbReference type="KEGG" id="sye:Syncc9902_2081"/>
<dbReference type="eggNOG" id="ENOG50332MV">
    <property type="taxonomic scope" value="Bacteria"/>
</dbReference>
<dbReference type="HOGENOM" id="CLU_190203_0_0_3"/>
<dbReference type="OrthoDB" id="427121at2"/>
<dbReference type="Proteomes" id="UP000002712">
    <property type="component" value="Chromosome"/>
</dbReference>
<dbReference type="GO" id="GO:0009523">
    <property type="term" value="C:photosystem II"/>
    <property type="evidence" value="ECO:0007669"/>
    <property type="project" value="UniProtKB-KW"/>
</dbReference>
<dbReference type="GO" id="GO:0031676">
    <property type="term" value="C:plasma membrane-derived thylakoid membrane"/>
    <property type="evidence" value="ECO:0007669"/>
    <property type="project" value="UniProtKB-SubCell"/>
</dbReference>
<dbReference type="GO" id="GO:0042301">
    <property type="term" value="F:phosphate ion binding"/>
    <property type="evidence" value="ECO:0007669"/>
    <property type="project" value="InterPro"/>
</dbReference>
<dbReference type="GO" id="GO:0015979">
    <property type="term" value="P:photosynthesis"/>
    <property type="evidence" value="ECO:0007669"/>
    <property type="project" value="UniProtKB-UniRule"/>
</dbReference>
<dbReference type="GO" id="GO:0050821">
    <property type="term" value="P:protein stabilization"/>
    <property type="evidence" value="ECO:0007669"/>
    <property type="project" value="InterPro"/>
</dbReference>
<dbReference type="Gene3D" id="1.20.5.880">
    <property type="entry name" value="Photosystem II reaction center protein H"/>
    <property type="match status" value="1"/>
</dbReference>
<dbReference type="HAMAP" id="MF_00752">
    <property type="entry name" value="PSII_PsbH"/>
    <property type="match status" value="1"/>
</dbReference>
<dbReference type="InterPro" id="IPR001056">
    <property type="entry name" value="PSII_PsbH"/>
</dbReference>
<dbReference type="InterPro" id="IPR036863">
    <property type="entry name" value="PSII_PsbH_sf"/>
</dbReference>
<dbReference type="NCBIfam" id="NF002728">
    <property type="entry name" value="PRK02624.1"/>
    <property type="match status" value="1"/>
</dbReference>
<dbReference type="PANTHER" id="PTHR34469">
    <property type="entry name" value="PHOTOSYSTEM II REACTION CENTER PROTEIN H"/>
    <property type="match status" value="1"/>
</dbReference>
<dbReference type="PANTHER" id="PTHR34469:SF4">
    <property type="entry name" value="PHOTOSYSTEM II REACTION CENTER PROTEIN H"/>
    <property type="match status" value="1"/>
</dbReference>
<dbReference type="Pfam" id="PF00737">
    <property type="entry name" value="PsbH"/>
    <property type="match status" value="1"/>
</dbReference>
<dbReference type="SUPFAM" id="SSF161025">
    <property type="entry name" value="Photosystem II 10 kDa phosphoprotein PsbH"/>
    <property type="match status" value="1"/>
</dbReference>
<organism>
    <name type="scientific">Synechococcus sp. (strain CC9902)</name>
    <dbReference type="NCBI Taxonomy" id="316279"/>
    <lineage>
        <taxon>Bacteria</taxon>
        <taxon>Bacillati</taxon>
        <taxon>Cyanobacteriota</taxon>
        <taxon>Cyanophyceae</taxon>
        <taxon>Synechococcales</taxon>
        <taxon>Synechococcaceae</taxon>
        <taxon>Synechococcus</taxon>
    </lineage>
</organism>
<sequence>MAQRTRLGDLLRPLNSEYGKVVPGWGTTPVMGIFMVLFLVFLLVILQLYNKSLILEGINVNWNGLG</sequence>
<accession>Q3AUQ6</accession>
<feature type="chain" id="PRO_1000046598" description="Photosystem II reaction center protein H">
    <location>
        <begin position="1"/>
        <end position="66"/>
    </location>
</feature>
<feature type="transmembrane region" description="Helical" evidence="1">
    <location>
        <begin position="29"/>
        <end position="49"/>
    </location>
</feature>